<dbReference type="EMBL" id="CP000758">
    <property type="protein sequence ID" value="ABS14745.1"/>
    <property type="molecule type" value="Genomic_DNA"/>
</dbReference>
<dbReference type="RefSeq" id="WP_010659976.1">
    <property type="nucleotide sequence ID" value="NC_009667.1"/>
</dbReference>
<dbReference type="SMR" id="A6X0J1"/>
<dbReference type="STRING" id="439375.Oant_2029"/>
<dbReference type="GeneID" id="61317514"/>
<dbReference type="KEGG" id="oan:Oant_2029"/>
<dbReference type="eggNOG" id="COG0052">
    <property type="taxonomic scope" value="Bacteria"/>
</dbReference>
<dbReference type="HOGENOM" id="CLU_040318_2_1_5"/>
<dbReference type="PhylomeDB" id="A6X0J1"/>
<dbReference type="Proteomes" id="UP000002301">
    <property type="component" value="Chromosome 1"/>
</dbReference>
<dbReference type="GO" id="GO:0022627">
    <property type="term" value="C:cytosolic small ribosomal subunit"/>
    <property type="evidence" value="ECO:0007669"/>
    <property type="project" value="TreeGrafter"/>
</dbReference>
<dbReference type="GO" id="GO:0003735">
    <property type="term" value="F:structural constituent of ribosome"/>
    <property type="evidence" value="ECO:0007669"/>
    <property type="project" value="InterPro"/>
</dbReference>
<dbReference type="GO" id="GO:0006412">
    <property type="term" value="P:translation"/>
    <property type="evidence" value="ECO:0007669"/>
    <property type="project" value="UniProtKB-UniRule"/>
</dbReference>
<dbReference type="CDD" id="cd01425">
    <property type="entry name" value="RPS2"/>
    <property type="match status" value="1"/>
</dbReference>
<dbReference type="FunFam" id="1.10.287.610:FF:000001">
    <property type="entry name" value="30S ribosomal protein S2"/>
    <property type="match status" value="1"/>
</dbReference>
<dbReference type="Gene3D" id="3.40.50.10490">
    <property type="entry name" value="Glucose-6-phosphate isomerase like protein, domain 1"/>
    <property type="match status" value="1"/>
</dbReference>
<dbReference type="Gene3D" id="1.10.287.610">
    <property type="entry name" value="Helix hairpin bin"/>
    <property type="match status" value="1"/>
</dbReference>
<dbReference type="HAMAP" id="MF_00291_B">
    <property type="entry name" value="Ribosomal_uS2_B"/>
    <property type="match status" value="1"/>
</dbReference>
<dbReference type="InterPro" id="IPR001865">
    <property type="entry name" value="Ribosomal_uS2"/>
</dbReference>
<dbReference type="InterPro" id="IPR005706">
    <property type="entry name" value="Ribosomal_uS2_bac/mit/plastid"/>
</dbReference>
<dbReference type="InterPro" id="IPR018130">
    <property type="entry name" value="Ribosomal_uS2_CS"/>
</dbReference>
<dbReference type="InterPro" id="IPR023591">
    <property type="entry name" value="Ribosomal_uS2_flav_dom_sf"/>
</dbReference>
<dbReference type="NCBIfam" id="TIGR01011">
    <property type="entry name" value="rpsB_bact"/>
    <property type="match status" value="1"/>
</dbReference>
<dbReference type="PANTHER" id="PTHR12534">
    <property type="entry name" value="30S RIBOSOMAL PROTEIN S2 PROKARYOTIC AND ORGANELLAR"/>
    <property type="match status" value="1"/>
</dbReference>
<dbReference type="PANTHER" id="PTHR12534:SF0">
    <property type="entry name" value="SMALL RIBOSOMAL SUBUNIT PROTEIN US2M"/>
    <property type="match status" value="1"/>
</dbReference>
<dbReference type="Pfam" id="PF00318">
    <property type="entry name" value="Ribosomal_S2"/>
    <property type="match status" value="1"/>
</dbReference>
<dbReference type="PRINTS" id="PR00395">
    <property type="entry name" value="RIBOSOMALS2"/>
</dbReference>
<dbReference type="SUPFAM" id="SSF52313">
    <property type="entry name" value="Ribosomal protein S2"/>
    <property type="match status" value="1"/>
</dbReference>
<dbReference type="PROSITE" id="PS00962">
    <property type="entry name" value="RIBOSOMAL_S2_1"/>
    <property type="match status" value="1"/>
</dbReference>
<dbReference type="PROSITE" id="PS00963">
    <property type="entry name" value="RIBOSOMAL_S2_2"/>
    <property type="match status" value="1"/>
</dbReference>
<comment type="similarity">
    <text evidence="1">Belongs to the universal ribosomal protein uS2 family.</text>
</comment>
<feature type="chain" id="PRO_1000004013" description="Small ribosomal subunit protein uS2">
    <location>
        <begin position="1"/>
        <end position="256"/>
    </location>
</feature>
<proteinExistence type="inferred from homology"/>
<accession>A6X0J1</accession>
<reference key="1">
    <citation type="journal article" date="2011" name="J. Bacteriol.">
        <title>Genome of Ochrobactrum anthropi ATCC 49188 T, a versatile opportunistic pathogen and symbiont of several eukaryotic hosts.</title>
        <authorList>
            <person name="Chain P.S."/>
            <person name="Lang D.M."/>
            <person name="Comerci D.J."/>
            <person name="Malfatti S.A."/>
            <person name="Vergez L.M."/>
            <person name="Shin M."/>
            <person name="Ugalde R.A."/>
            <person name="Garcia E."/>
            <person name="Tolmasky M.E."/>
        </authorList>
    </citation>
    <scope>NUCLEOTIDE SEQUENCE [LARGE SCALE GENOMIC DNA]</scope>
    <source>
        <strain>ATCC 49188 / DSM 6882 / CCUG 24695 / JCM 21032 / LMG 3331 / NBRC 15819 / NCTC 12168 / Alc 37</strain>
    </source>
</reference>
<protein>
    <recommendedName>
        <fullName evidence="1">Small ribosomal subunit protein uS2</fullName>
    </recommendedName>
    <alternativeName>
        <fullName evidence="2">30S ribosomal protein S2</fullName>
    </alternativeName>
</protein>
<keyword id="KW-1185">Reference proteome</keyword>
<keyword id="KW-0687">Ribonucleoprotein</keyword>
<keyword id="KW-0689">Ribosomal protein</keyword>
<organism>
    <name type="scientific">Brucella anthropi (strain ATCC 49188 / DSM 6882 / CCUG 24695 / JCM 21032 / LMG 3331 / NBRC 15819 / NCTC 12168 / Alc 37)</name>
    <name type="common">Ochrobactrum anthropi</name>
    <dbReference type="NCBI Taxonomy" id="439375"/>
    <lineage>
        <taxon>Bacteria</taxon>
        <taxon>Pseudomonadati</taxon>
        <taxon>Pseudomonadota</taxon>
        <taxon>Alphaproteobacteria</taxon>
        <taxon>Hyphomicrobiales</taxon>
        <taxon>Brucellaceae</taxon>
        <taxon>Brucella/Ochrobactrum group</taxon>
        <taxon>Brucella</taxon>
    </lineage>
</organism>
<sequence>MALPDFSMRQLLEAGVHFGHQTHRWNPKMAPYIYGDRNNIHILDLSQTVPLLHNALKIVSDTVARGGRVLFVGTKRQASDIIADAANRSAQYYVNARWLGGMMTNWKTISNSIQRLRKLDELLAGEAQGFTKKERLNLEREREKLDRALGGIKDMGSVPDLMFIIDTNKEAIAIQEAKRLGIPVVAVIDSNCDPDQIDYPIPGNDDAARAIALYCDLIARAALDGIARQQGAMGIDVGAQAEAPVEPALEAPAEGA</sequence>
<gene>
    <name evidence="1" type="primary">rpsB</name>
    <name type="ordered locus">Oant_2029</name>
</gene>
<evidence type="ECO:0000255" key="1">
    <source>
        <dbReference type="HAMAP-Rule" id="MF_00291"/>
    </source>
</evidence>
<evidence type="ECO:0000305" key="2"/>
<name>RS2_BRUA4</name>